<proteinExistence type="inferred from homology"/>
<dbReference type="EC" id="2.5.1.6" evidence="1"/>
<dbReference type="EMBL" id="AE014184">
    <property type="protein sequence ID" value="AAO44457.1"/>
    <property type="molecule type" value="Genomic_DNA"/>
</dbReference>
<dbReference type="RefSeq" id="WP_011102527.1">
    <property type="nucleotide sequence ID" value="NC_004572.3"/>
</dbReference>
<dbReference type="SMR" id="Q83GE4"/>
<dbReference type="STRING" id="203267.TWT_360"/>
<dbReference type="KEGG" id="twh:TWT_360"/>
<dbReference type="eggNOG" id="COG0192">
    <property type="taxonomic scope" value="Bacteria"/>
</dbReference>
<dbReference type="HOGENOM" id="CLU_041802_1_1_11"/>
<dbReference type="OrthoDB" id="9801686at2"/>
<dbReference type="UniPathway" id="UPA00315">
    <property type="reaction ID" value="UER00080"/>
</dbReference>
<dbReference type="Proteomes" id="UP000002200">
    <property type="component" value="Chromosome"/>
</dbReference>
<dbReference type="GO" id="GO:0005737">
    <property type="term" value="C:cytoplasm"/>
    <property type="evidence" value="ECO:0007669"/>
    <property type="project" value="UniProtKB-SubCell"/>
</dbReference>
<dbReference type="GO" id="GO:0005524">
    <property type="term" value="F:ATP binding"/>
    <property type="evidence" value="ECO:0007669"/>
    <property type="project" value="UniProtKB-UniRule"/>
</dbReference>
<dbReference type="GO" id="GO:0000287">
    <property type="term" value="F:magnesium ion binding"/>
    <property type="evidence" value="ECO:0007669"/>
    <property type="project" value="UniProtKB-UniRule"/>
</dbReference>
<dbReference type="GO" id="GO:0004478">
    <property type="term" value="F:methionine adenosyltransferase activity"/>
    <property type="evidence" value="ECO:0007669"/>
    <property type="project" value="UniProtKB-UniRule"/>
</dbReference>
<dbReference type="GO" id="GO:0006730">
    <property type="term" value="P:one-carbon metabolic process"/>
    <property type="evidence" value="ECO:0007669"/>
    <property type="project" value="UniProtKB-KW"/>
</dbReference>
<dbReference type="GO" id="GO:0006556">
    <property type="term" value="P:S-adenosylmethionine biosynthetic process"/>
    <property type="evidence" value="ECO:0007669"/>
    <property type="project" value="UniProtKB-UniRule"/>
</dbReference>
<dbReference type="CDD" id="cd18079">
    <property type="entry name" value="S-AdoMet_synt"/>
    <property type="match status" value="1"/>
</dbReference>
<dbReference type="FunFam" id="3.30.300.10:FF:000003">
    <property type="entry name" value="S-adenosylmethionine synthase"/>
    <property type="match status" value="1"/>
</dbReference>
<dbReference type="Gene3D" id="3.30.300.10">
    <property type="match status" value="3"/>
</dbReference>
<dbReference type="HAMAP" id="MF_00086">
    <property type="entry name" value="S_AdoMet_synth1"/>
    <property type="match status" value="1"/>
</dbReference>
<dbReference type="InterPro" id="IPR022631">
    <property type="entry name" value="ADOMET_SYNTHASE_CS"/>
</dbReference>
<dbReference type="InterPro" id="IPR022630">
    <property type="entry name" value="S-AdoMet_synt_C"/>
</dbReference>
<dbReference type="InterPro" id="IPR022629">
    <property type="entry name" value="S-AdoMet_synt_central"/>
</dbReference>
<dbReference type="InterPro" id="IPR022628">
    <property type="entry name" value="S-AdoMet_synt_N"/>
</dbReference>
<dbReference type="InterPro" id="IPR002133">
    <property type="entry name" value="S-AdoMet_synthetase"/>
</dbReference>
<dbReference type="InterPro" id="IPR022636">
    <property type="entry name" value="S-AdoMet_synthetase_sfam"/>
</dbReference>
<dbReference type="NCBIfam" id="TIGR01034">
    <property type="entry name" value="metK"/>
    <property type="match status" value="1"/>
</dbReference>
<dbReference type="PANTHER" id="PTHR11964">
    <property type="entry name" value="S-ADENOSYLMETHIONINE SYNTHETASE"/>
    <property type="match status" value="1"/>
</dbReference>
<dbReference type="Pfam" id="PF02773">
    <property type="entry name" value="S-AdoMet_synt_C"/>
    <property type="match status" value="1"/>
</dbReference>
<dbReference type="Pfam" id="PF02772">
    <property type="entry name" value="S-AdoMet_synt_M"/>
    <property type="match status" value="1"/>
</dbReference>
<dbReference type="Pfam" id="PF00438">
    <property type="entry name" value="S-AdoMet_synt_N"/>
    <property type="match status" value="1"/>
</dbReference>
<dbReference type="PIRSF" id="PIRSF000497">
    <property type="entry name" value="MAT"/>
    <property type="match status" value="1"/>
</dbReference>
<dbReference type="SUPFAM" id="SSF55973">
    <property type="entry name" value="S-adenosylmethionine synthetase"/>
    <property type="match status" value="3"/>
</dbReference>
<dbReference type="PROSITE" id="PS00376">
    <property type="entry name" value="ADOMET_SYNTHASE_1"/>
    <property type="match status" value="1"/>
</dbReference>
<keyword id="KW-0067">ATP-binding</keyword>
<keyword id="KW-0963">Cytoplasm</keyword>
<keyword id="KW-0460">Magnesium</keyword>
<keyword id="KW-0479">Metal-binding</keyword>
<keyword id="KW-0547">Nucleotide-binding</keyword>
<keyword id="KW-0554">One-carbon metabolism</keyword>
<keyword id="KW-0630">Potassium</keyword>
<keyword id="KW-1185">Reference proteome</keyword>
<keyword id="KW-0808">Transferase</keyword>
<evidence type="ECO:0000255" key="1">
    <source>
        <dbReference type="HAMAP-Rule" id="MF_00086"/>
    </source>
</evidence>
<gene>
    <name evidence="1" type="primary">metK</name>
    <name type="ordered locus">TWT_360</name>
</gene>
<reference key="1">
    <citation type="journal article" date="2003" name="Genome Res.">
        <title>Tropheryma whipplei twist: a human pathogenic Actinobacteria with a reduced genome.</title>
        <authorList>
            <person name="Raoult D."/>
            <person name="Ogata H."/>
            <person name="Audic S."/>
            <person name="Robert C."/>
            <person name="Suhre K."/>
            <person name="Drancourt M."/>
            <person name="Claverie J.-M."/>
        </authorList>
    </citation>
    <scope>NUCLEOTIDE SEQUENCE [LARGE SCALE GENOMIC DNA]</scope>
    <source>
        <strain>Twist</strain>
    </source>
</reference>
<name>METK_TROWT</name>
<feature type="chain" id="PRO_0000174619" description="S-adenosylmethionine synthase">
    <location>
        <begin position="1"/>
        <end position="395"/>
    </location>
</feature>
<feature type="region of interest" description="Flexible loop" evidence="1">
    <location>
        <begin position="96"/>
        <end position="106"/>
    </location>
</feature>
<feature type="binding site" description="in other chain" evidence="1">
    <location>
        <position position="12"/>
    </location>
    <ligand>
        <name>ATP</name>
        <dbReference type="ChEBI" id="CHEBI:30616"/>
        <note>ligand shared between two neighboring subunits</note>
    </ligand>
</feature>
<feature type="binding site" evidence="1">
    <location>
        <position position="14"/>
    </location>
    <ligand>
        <name>Mg(2+)</name>
        <dbReference type="ChEBI" id="CHEBI:18420"/>
    </ligand>
</feature>
<feature type="binding site" evidence="1">
    <location>
        <position position="40"/>
    </location>
    <ligand>
        <name>K(+)</name>
        <dbReference type="ChEBI" id="CHEBI:29103"/>
    </ligand>
</feature>
<feature type="binding site" description="in other chain" evidence="1">
    <location>
        <position position="53"/>
    </location>
    <ligand>
        <name>L-methionine</name>
        <dbReference type="ChEBI" id="CHEBI:57844"/>
        <note>ligand shared between two neighboring subunits</note>
    </ligand>
</feature>
<feature type="binding site" description="in other chain" evidence="1">
    <location>
        <position position="96"/>
    </location>
    <ligand>
        <name>L-methionine</name>
        <dbReference type="ChEBI" id="CHEBI:57844"/>
        <note>ligand shared between two neighboring subunits</note>
    </ligand>
</feature>
<feature type="binding site" description="in other chain" evidence="1">
    <location>
        <begin position="174"/>
        <end position="176"/>
    </location>
    <ligand>
        <name>ATP</name>
        <dbReference type="ChEBI" id="CHEBI:30616"/>
        <note>ligand shared between two neighboring subunits</note>
    </ligand>
</feature>
<feature type="binding site" description="in other chain" evidence="1">
    <location>
        <begin position="242"/>
        <end position="243"/>
    </location>
    <ligand>
        <name>ATP</name>
        <dbReference type="ChEBI" id="CHEBI:30616"/>
        <note>ligand shared between two neighboring subunits</note>
    </ligand>
</feature>
<feature type="binding site" evidence="1">
    <location>
        <position position="251"/>
    </location>
    <ligand>
        <name>ATP</name>
        <dbReference type="ChEBI" id="CHEBI:30616"/>
        <note>ligand shared between two neighboring subunits</note>
    </ligand>
</feature>
<feature type="binding site" evidence="1">
    <location>
        <position position="251"/>
    </location>
    <ligand>
        <name>L-methionine</name>
        <dbReference type="ChEBI" id="CHEBI:57844"/>
        <note>ligand shared between two neighboring subunits</note>
    </ligand>
</feature>
<feature type="binding site" description="in other chain" evidence="1">
    <location>
        <begin position="257"/>
        <end position="258"/>
    </location>
    <ligand>
        <name>ATP</name>
        <dbReference type="ChEBI" id="CHEBI:30616"/>
        <note>ligand shared between two neighboring subunits</note>
    </ligand>
</feature>
<feature type="binding site" evidence="1">
    <location>
        <position position="274"/>
    </location>
    <ligand>
        <name>ATP</name>
        <dbReference type="ChEBI" id="CHEBI:30616"/>
        <note>ligand shared between two neighboring subunits</note>
    </ligand>
</feature>
<feature type="binding site" evidence="1">
    <location>
        <position position="278"/>
    </location>
    <ligand>
        <name>ATP</name>
        <dbReference type="ChEBI" id="CHEBI:30616"/>
        <note>ligand shared between two neighboring subunits</note>
    </ligand>
</feature>
<feature type="binding site" description="in other chain" evidence="1">
    <location>
        <position position="282"/>
    </location>
    <ligand>
        <name>L-methionine</name>
        <dbReference type="ChEBI" id="CHEBI:57844"/>
        <note>ligand shared between two neighboring subunits</note>
    </ligand>
</feature>
<protein>
    <recommendedName>
        <fullName evidence="1">S-adenosylmethionine synthase</fullName>
        <shortName evidence="1">AdoMet synthase</shortName>
        <ecNumber evidence="1">2.5.1.6</ecNumber>
    </recommendedName>
    <alternativeName>
        <fullName evidence="1">MAT</fullName>
    </alternativeName>
    <alternativeName>
        <fullName evidence="1">Methionine adenosyltransferase</fullName>
    </alternativeName>
</protein>
<accession>Q83GE4</accession>
<sequence length="395" mass="42664">MILTSESVTEGHPDKLCDQISDAILDGVICKDKNARAGIETIAGNGVVHVFGEVSNPDSVDIPGIIRKTILDIGYTSEDAGIDGNTCSIQESITSQSKEIADAVNFSLEYRNQQGDLGRNSFSQQGSGDQGSVFGYACRETPEMMPLPITIAHKLAYSLAFVRKEKILPYLLPDGKSQVTLGYDSANRPKTLETVVISAQHEDSVDLDKLRFDILERVVRPVISATGLDCSKATFLINPAGRFVTGGPSADSGLTGRKIVVDTYGCAAKHGGGALSGKDPSKLDRFASYMARWVAKHVVAADFAESIEVQISYAIGKAHPVAFNIDTHGTNTIALDKLKRAILKVFDFRPAAVIDSLDLKRPIYQKTAAYGHFGRDIFTWERICPDKLNALLGAV</sequence>
<comment type="function">
    <text evidence="1">Catalyzes the formation of S-adenosylmethionine (AdoMet) from methionine and ATP. The overall synthetic reaction is composed of two sequential steps, AdoMet formation and the subsequent tripolyphosphate hydrolysis which occurs prior to release of AdoMet from the enzyme.</text>
</comment>
<comment type="catalytic activity">
    <reaction evidence="1">
        <text>L-methionine + ATP + H2O = S-adenosyl-L-methionine + phosphate + diphosphate</text>
        <dbReference type="Rhea" id="RHEA:21080"/>
        <dbReference type="ChEBI" id="CHEBI:15377"/>
        <dbReference type="ChEBI" id="CHEBI:30616"/>
        <dbReference type="ChEBI" id="CHEBI:33019"/>
        <dbReference type="ChEBI" id="CHEBI:43474"/>
        <dbReference type="ChEBI" id="CHEBI:57844"/>
        <dbReference type="ChEBI" id="CHEBI:59789"/>
        <dbReference type="EC" id="2.5.1.6"/>
    </reaction>
</comment>
<comment type="cofactor">
    <cofactor evidence="1">
        <name>Mg(2+)</name>
        <dbReference type="ChEBI" id="CHEBI:18420"/>
    </cofactor>
    <text evidence="1">Binds 2 divalent ions per subunit.</text>
</comment>
<comment type="cofactor">
    <cofactor evidence="1">
        <name>K(+)</name>
        <dbReference type="ChEBI" id="CHEBI:29103"/>
    </cofactor>
    <text evidence="1">Binds 1 potassium ion per subunit.</text>
</comment>
<comment type="pathway">
    <text evidence="1">Amino-acid biosynthesis; S-adenosyl-L-methionine biosynthesis; S-adenosyl-L-methionine from L-methionine: step 1/1.</text>
</comment>
<comment type="subunit">
    <text evidence="1">Homotetramer; dimer of dimers.</text>
</comment>
<comment type="subcellular location">
    <subcellularLocation>
        <location evidence="1">Cytoplasm</location>
    </subcellularLocation>
</comment>
<comment type="similarity">
    <text evidence="1">Belongs to the AdoMet synthase family.</text>
</comment>
<organism>
    <name type="scientific">Tropheryma whipplei (strain Twist)</name>
    <name type="common">Whipple's bacillus</name>
    <dbReference type="NCBI Taxonomy" id="203267"/>
    <lineage>
        <taxon>Bacteria</taxon>
        <taxon>Bacillati</taxon>
        <taxon>Actinomycetota</taxon>
        <taxon>Actinomycetes</taxon>
        <taxon>Micrococcales</taxon>
        <taxon>Tropherymataceae</taxon>
        <taxon>Tropheryma</taxon>
    </lineage>
</organism>